<dbReference type="EMBL" id="CP000103">
    <property type="protein sequence ID" value="ABB73878.1"/>
    <property type="molecule type" value="Genomic_DNA"/>
</dbReference>
<dbReference type="RefSeq" id="WP_011379932.1">
    <property type="nucleotide sequence ID" value="NC_007614.1"/>
</dbReference>
<dbReference type="SMR" id="Q2YBJ3"/>
<dbReference type="STRING" id="323848.Nmul_A0570"/>
<dbReference type="KEGG" id="nmu:Nmul_A0570"/>
<dbReference type="eggNOG" id="COG0806">
    <property type="taxonomic scope" value="Bacteria"/>
</dbReference>
<dbReference type="HOGENOM" id="CLU_077636_1_0_4"/>
<dbReference type="OrthoDB" id="9783509at2"/>
<dbReference type="Proteomes" id="UP000002718">
    <property type="component" value="Chromosome"/>
</dbReference>
<dbReference type="GO" id="GO:0005737">
    <property type="term" value="C:cytoplasm"/>
    <property type="evidence" value="ECO:0007669"/>
    <property type="project" value="UniProtKB-SubCell"/>
</dbReference>
<dbReference type="GO" id="GO:0005840">
    <property type="term" value="C:ribosome"/>
    <property type="evidence" value="ECO:0007669"/>
    <property type="project" value="InterPro"/>
</dbReference>
<dbReference type="GO" id="GO:0043022">
    <property type="term" value="F:ribosome binding"/>
    <property type="evidence" value="ECO:0007669"/>
    <property type="project" value="InterPro"/>
</dbReference>
<dbReference type="GO" id="GO:0042274">
    <property type="term" value="P:ribosomal small subunit biogenesis"/>
    <property type="evidence" value="ECO:0007669"/>
    <property type="project" value="UniProtKB-UniRule"/>
</dbReference>
<dbReference type="GO" id="GO:0006364">
    <property type="term" value="P:rRNA processing"/>
    <property type="evidence" value="ECO:0007669"/>
    <property type="project" value="UniProtKB-UniRule"/>
</dbReference>
<dbReference type="Gene3D" id="2.30.30.240">
    <property type="entry name" value="PRC-barrel domain"/>
    <property type="match status" value="1"/>
</dbReference>
<dbReference type="Gene3D" id="2.40.30.60">
    <property type="entry name" value="RimM"/>
    <property type="match status" value="1"/>
</dbReference>
<dbReference type="HAMAP" id="MF_00014">
    <property type="entry name" value="Ribosome_mat_RimM"/>
    <property type="match status" value="1"/>
</dbReference>
<dbReference type="InterPro" id="IPR011033">
    <property type="entry name" value="PRC_barrel-like_sf"/>
</dbReference>
<dbReference type="InterPro" id="IPR056792">
    <property type="entry name" value="PRC_RimM"/>
</dbReference>
<dbReference type="InterPro" id="IPR011961">
    <property type="entry name" value="RimM"/>
</dbReference>
<dbReference type="InterPro" id="IPR002676">
    <property type="entry name" value="RimM_N"/>
</dbReference>
<dbReference type="InterPro" id="IPR036976">
    <property type="entry name" value="RimM_N_sf"/>
</dbReference>
<dbReference type="InterPro" id="IPR009000">
    <property type="entry name" value="Transl_B-barrel_sf"/>
</dbReference>
<dbReference type="NCBIfam" id="TIGR02273">
    <property type="entry name" value="16S_RimM"/>
    <property type="match status" value="1"/>
</dbReference>
<dbReference type="PANTHER" id="PTHR33692">
    <property type="entry name" value="RIBOSOME MATURATION FACTOR RIMM"/>
    <property type="match status" value="1"/>
</dbReference>
<dbReference type="PANTHER" id="PTHR33692:SF1">
    <property type="entry name" value="RIBOSOME MATURATION FACTOR RIMM"/>
    <property type="match status" value="1"/>
</dbReference>
<dbReference type="Pfam" id="PF24986">
    <property type="entry name" value="PRC_RimM"/>
    <property type="match status" value="1"/>
</dbReference>
<dbReference type="Pfam" id="PF01782">
    <property type="entry name" value="RimM"/>
    <property type="match status" value="1"/>
</dbReference>
<dbReference type="SUPFAM" id="SSF50346">
    <property type="entry name" value="PRC-barrel domain"/>
    <property type="match status" value="1"/>
</dbReference>
<dbReference type="SUPFAM" id="SSF50447">
    <property type="entry name" value="Translation proteins"/>
    <property type="match status" value="1"/>
</dbReference>
<comment type="function">
    <text evidence="1">An accessory protein needed during the final step in the assembly of 30S ribosomal subunit, possibly for assembly of the head region. Essential for efficient processing of 16S rRNA. May be needed both before and after RbfA during the maturation of 16S rRNA. It has affinity for free ribosomal 30S subunits but not for 70S ribosomes.</text>
</comment>
<comment type="subunit">
    <text evidence="1">Binds ribosomal protein uS19.</text>
</comment>
<comment type="subcellular location">
    <subcellularLocation>
        <location evidence="1">Cytoplasm</location>
    </subcellularLocation>
</comment>
<comment type="domain">
    <text evidence="1">The PRC barrel domain binds ribosomal protein uS19.</text>
</comment>
<comment type="similarity">
    <text evidence="1">Belongs to the RimM family.</text>
</comment>
<proteinExistence type="inferred from homology"/>
<organism>
    <name type="scientific">Nitrosospira multiformis (strain ATCC 25196 / NCIMB 11849 / C 71)</name>
    <dbReference type="NCBI Taxonomy" id="323848"/>
    <lineage>
        <taxon>Bacteria</taxon>
        <taxon>Pseudomonadati</taxon>
        <taxon>Pseudomonadota</taxon>
        <taxon>Betaproteobacteria</taxon>
        <taxon>Nitrosomonadales</taxon>
        <taxon>Nitrosomonadaceae</taxon>
        <taxon>Nitrosospira</taxon>
    </lineage>
</organism>
<feature type="chain" id="PRO_0000244142" description="Ribosome maturation factor RimM">
    <location>
        <begin position="1"/>
        <end position="168"/>
    </location>
</feature>
<feature type="domain" description="PRC barrel" evidence="1">
    <location>
        <begin position="95"/>
        <end position="168"/>
    </location>
</feature>
<accession>Q2YBJ3</accession>
<keyword id="KW-0143">Chaperone</keyword>
<keyword id="KW-0963">Cytoplasm</keyword>
<keyword id="KW-1185">Reference proteome</keyword>
<keyword id="KW-0690">Ribosome biogenesis</keyword>
<keyword id="KW-0698">rRNA processing</keyword>
<reference key="1">
    <citation type="submission" date="2005-08" db="EMBL/GenBank/DDBJ databases">
        <title>Complete sequence of chromosome 1 of Nitrosospira multiformis ATCC 25196.</title>
        <authorList>
            <person name="Copeland A."/>
            <person name="Lucas S."/>
            <person name="Lapidus A."/>
            <person name="Barry K."/>
            <person name="Detter J.C."/>
            <person name="Glavina T."/>
            <person name="Hammon N."/>
            <person name="Israni S."/>
            <person name="Pitluck S."/>
            <person name="Chain P."/>
            <person name="Malfatti S."/>
            <person name="Shin M."/>
            <person name="Vergez L."/>
            <person name="Schmutz J."/>
            <person name="Larimer F."/>
            <person name="Land M."/>
            <person name="Hauser L."/>
            <person name="Kyrpides N."/>
            <person name="Lykidis A."/>
            <person name="Richardson P."/>
        </authorList>
    </citation>
    <scope>NUCLEOTIDE SEQUENCE [LARGE SCALE GENOMIC DNA]</scope>
    <source>
        <strain>ATCC 25196 / NCIMB 11849 / C 71</strain>
    </source>
</reference>
<sequence length="168" mass="18492">MVIMGRVAGPYAVAGWIKVFPYTEYVDGLLDYPDWWLGSEGGKWHKFKVIEGEVHGSVLLASLEQCADRDAAARLKGLKIAIPRRLLPALPESGEEGYYWSDLIGLAVINLQGEVLGKVAGLLETGANDVLQVQNPEETERLIPFIDQVIIKVDLAAGRITVDWGLDY</sequence>
<name>RIMM_NITMU</name>
<protein>
    <recommendedName>
        <fullName evidence="1">Ribosome maturation factor RimM</fullName>
    </recommendedName>
</protein>
<evidence type="ECO:0000255" key="1">
    <source>
        <dbReference type="HAMAP-Rule" id="MF_00014"/>
    </source>
</evidence>
<gene>
    <name evidence="1" type="primary">rimM</name>
    <name type="ordered locus">Nmul_A0570</name>
</gene>